<evidence type="ECO:0000255" key="1">
    <source>
        <dbReference type="HAMAP-Rule" id="MF_00435"/>
    </source>
</evidence>
<evidence type="ECO:0000255" key="2">
    <source>
        <dbReference type="PROSITE-ProRule" id="PRU01197"/>
    </source>
</evidence>
<evidence type="ECO:0000255" key="3">
    <source>
        <dbReference type="PROSITE-ProRule" id="PRU01198"/>
    </source>
</evidence>
<proteinExistence type="inferred from homology"/>
<comment type="function">
    <text evidence="1">Involved in the biosynthesis of branched-chain amino acids (BCAA). Catalyzes an alkyl-migration followed by a ketol-acid reduction of (S)-2-acetolactate (S2AL) to yield (R)-2,3-dihydroxy-isovalerate. In the isomerase reaction, S2AL is rearranged via a Mg-dependent methyl migration to produce 3-hydroxy-3-methyl-2-ketobutyrate (HMKB). In the reductase reaction, this 2-ketoacid undergoes a metal-dependent reduction by NADPH to yield (R)-2,3-dihydroxy-isovalerate.</text>
</comment>
<comment type="catalytic activity">
    <reaction evidence="1">
        <text>(2R)-2,3-dihydroxy-3-methylbutanoate + NADP(+) = (2S)-2-acetolactate + NADPH + H(+)</text>
        <dbReference type="Rhea" id="RHEA:22068"/>
        <dbReference type="ChEBI" id="CHEBI:15378"/>
        <dbReference type="ChEBI" id="CHEBI:49072"/>
        <dbReference type="ChEBI" id="CHEBI:57783"/>
        <dbReference type="ChEBI" id="CHEBI:58349"/>
        <dbReference type="ChEBI" id="CHEBI:58476"/>
        <dbReference type="EC" id="1.1.1.86"/>
    </reaction>
</comment>
<comment type="catalytic activity">
    <reaction evidence="1">
        <text>(2R,3R)-2,3-dihydroxy-3-methylpentanoate + NADP(+) = (S)-2-ethyl-2-hydroxy-3-oxobutanoate + NADPH + H(+)</text>
        <dbReference type="Rhea" id="RHEA:13493"/>
        <dbReference type="ChEBI" id="CHEBI:15378"/>
        <dbReference type="ChEBI" id="CHEBI:49256"/>
        <dbReference type="ChEBI" id="CHEBI:49258"/>
        <dbReference type="ChEBI" id="CHEBI:57783"/>
        <dbReference type="ChEBI" id="CHEBI:58349"/>
        <dbReference type="EC" id="1.1.1.86"/>
    </reaction>
</comment>
<comment type="cofactor">
    <cofactor evidence="1">
        <name>Mg(2+)</name>
        <dbReference type="ChEBI" id="CHEBI:18420"/>
    </cofactor>
    <text evidence="1">Binds 2 magnesium ions per subunit.</text>
</comment>
<comment type="pathway">
    <text evidence="1">Amino-acid biosynthesis; L-isoleucine biosynthesis; L-isoleucine from 2-oxobutanoate: step 2/4.</text>
</comment>
<comment type="pathway">
    <text evidence="1">Amino-acid biosynthesis; L-valine biosynthesis; L-valine from pyruvate: step 2/4.</text>
</comment>
<comment type="similarity">
    <text evidence="1">Belongs to the ketol-acid reductoisomerase family.</text>
</comment>
<name>ILVC_SYNR3</name>
<feature type="chain" id="PRO_1000050584" description="Ketol-acid reductoisomerase (NADP(+))">
    <location>
        <begin position="1"/>
        <end position="331"/>
    </location>
</feature>
<feature type="domain" description="KARI N-terminal Rossmann" evidence="2">
    <location>
        <begin position="1"/>
        <end position="182"/>
    </location>
</feature>
<feature type="domain" description="KARI C-terminal knotted" evidence="3">
    <location>
        <begin position="183"/>
        <end position="328"/>
    </location>
</feature>
<feature type="active site" evidence="1">
    <location>
        <position position="108"/>
    </location>
</feature>
<feature type="binding site" evidence="1">
    <location>
        <begin position="25"/>
        <end position="28"/>
    </location>
    <ligand>
        <name>NADP(+)</name>
        <dbReference type="ChEBI" id="CHEBI:58349"/>
    </ligand>
</feature>
<feature type="binding site" evidence="1">
    <location>
        <position position="51"/>
    </location>
    <ligand>
        <name>NADP(+)</name>
        <dbReference type="ChEBI" id="CHEBI:58349"/>
    </ligand>
</feature>
<feature type="binding site" evidence="1">
    <location>
        <position position="53"/>
    </location>
    <ligand>
        <name>NADP(+)</name>
        <dbReference type="ChEBI" id="CHEBI:58349"/>
    </ligand>
</feature>
<feature type="binding site" evidence="1">
    <location>
        <begin position="83"/>
        <end position="86"/>
    </location>
    <ligand>
        <name>NADP(+)</name>
        <dbReference type="ChEBI" id="CHEBI:58349"/>
    </ligand>
</feature>
<feature type="binding site" evidence="1">
    <location>
        <position position="134"/>
    </location>
    <ligand>
        <name>NADP(+)</name>
        <dbReference type="ChEBI" id="CHEBI:58349"/>
    </ligand>
</feature>
<feature type="binding site" evidence="1">
    <location>
        <position position="191"/>
    </location>
    <ligand>
        <name>Mg(2+)</name>
        <dbReference type="ChEBI" id="CHEBI:18420"/>
        <label>1</label>
    </ligand>
</feature>
<feature type="binding site" evidence="1">
    <location>
        <position position="191"/>
    </location>
    <ligand>
        <name>Mg(2+)</name>
        <dbReference type="ChEBI" id="CHEBI:18420"/>
        <label>2</label>
    </ligand>
</feature>
<feature type="binding site" evidence="1">
    <location>
        <position position="195"/>
    </location>
    <ligand>
        <name>Mg(2+)</name>
        <dbReference type="ChEBI" id="CHEBI:18420"/>
        <label>1</label>
    </ligand>
</feature>
<feature type="binding site" evidence="1">
    <location>
        <position position="227"/>
    </location>
    <ligand>
        <name>Mg(2+)</name>
        <dbReference type="ChEBI" id="CHEBI:18420"/>
        <label>2</label>
    </ligand>
</feature>
<feature type="binding site" evidence="1">
    <location>
        <position position="231"/>
    </location>
    <ligand>
        <name>Mg(2+)</name>
        <dbReference type="ChEBI" id="CHEBI:18420"/>
        <label>2</label>
    </ligand>
</feature>
<feature type="binding site" evidence="1">
    <location>
        <position position="252"/>
    </location>
    <ligand>
        <name>substrate</name>
    </ligand>
</feature>
<organism>
    <name type="scientific">Synechococcus sp. (strain RCC307)</name>
    <dbReference type="NCBI Taxonomy" id="316278"/>
    <lineage>
        <taxon>Bacteria</taxon>
        <taxon>Bacillati</taxon>
        <taxon>Cyanobacteriota</taxon>
        <taxon>Cyanophyceae</taxon>
        <taxon>Synechococcales</taxon>
        <taxon>Synechococcaceae</taxon>
        <taxon>Synechococcus</taxon>
    </lineage>
</organism>
<dbReference type="EC" id="1.1.1.86" evidence="1"/>
<dbReference type="EMBL" id="CT978603">
    <property type="protein sequence ID" value="CAK27497.1"/>
    <property type="molecule type" value="Genomic_DNA"/>
</dbReference>
<dbReference type="SMR" id="A5GRI8"/>
<dbReference type="STRING" id="316278.SynRCC307_0594"/>
<dbReference type="KEGG" id="syr:SynRCC307_0594"/>
<dbReference type="eggNOG" id="COG0059">
    <property type="taxonomic scope" value="Bacteria"/>
</dbReference>
<dbReference type="HOGENOM" id="CLU_033821_0_1_3"/>
<dbReference type="OrthoDB" id="9804088at2"/>
<dbReference type="UniPathway" id="UPA00047">
    <property type="reaction ID" value="UER00056"/>
</dbReference>
<dbReference type="UniPathway" id="UPA00049">
    <property type="reaction ID" value="UER00060"/>
</dbReference>
<dbReference type="Proteomes" id="UP000001115">
    <property type="component" value="Chromosome"/>
</dbReference>
<dbReference type="GO" id="GO:0005829">
    <property type="term" value="C:cytosol"/>
    <property type="evidence" value="ECO:0007669"/>
    <property type="project" value="TreeGrafter"/>
</dbReference>
<dbReference type="GO" id="GO:0004455">
    <property type="term" value="F:ketol-acid reductoisomerase activity"/>
    <property type="evidence" value="ECO:0007669"/>
    <property type="project" value="UniProtKB-UniRule"/>
</dbReference>
<dbReference type="GO" id="GO:0000287">
    <property type="term" value="F:magnesium ion binding"/>
    <property type="evidence" value="ECO:0007669"/>
    <property type="project" value="UniProtKB-UniRule"/>
</dbReference>
<dbReference type="GO" id="GO:0050661">
    <property type="term" value="F:NADP binding"/>
    <property type="evidence" value="ECO:0007669"/>
    <property type="project" value="InterPro"/>
</dbReference>
<dbReference type="GO" id="GO:0009097">
    <property type="term" value="P:isoleucine biosynthetic process"/>
    <property type="evidence" value="ECO:0007669"/>
    <property type="project" value="UniProtKB-UniRule"/>
</dbReference>
<dbReference type="GO" id="GO:0009099">
    <property type="term" value="P:L-valine biosynthetic process"/>
    <property type="evidence" value="ECO:0007669"/>
    <property type="project" value="UniProtKB-UniRule"/>
</dbReference>
<dbReference type="FunFam" id="3.40.50.720:FF:000023">
    <property type="entry name" value="Ketol-acid reductoisomerase (NADP(+))"/>
    <property type="match status" value="1"/>
</dbReference>
<dbReference type="Gene3D" id="6.10.240.10">
    <property type="match status" value="1"/>
</dbReference>
<dbReference type="Gene3D" id="3.40.50.720">
    <property type="entry name" value="NAD(P)-binding Rossmann-like Domain"/>
    <property type="match status" value="1"/>
</dbReference>
<dbReference type="HAMAP" id="MF_00435">
    <property type="entry name" value="IlvC"/>
    <property type="match status" value="1"/>
</dbReference>
<dbReference type="InterPro" id="IPR008927">
    <property type="entry name" value="6-PGluconate_DH-like_C_sf"/>
</dbReference>
<dbReference type="InterPro" id="IPR013023">
    <property type="entry name" value="KARI"/>
</dbReference>
<dbReference type="InterPro" id="IPR000506">
    <property type="entry name" value="KARI_C"/>
</dbReference>
<dbReference type="InterPro" id="IPR013116">
    <property type="entry name" value="KARI_N"/>
</dbReference>
<dbReference type="InterPro" id="IPR014359">
    <property type="entry name" value="KARI_prok"/>
</dbReference>
<dbReference type="InterPro" id="IPR036291">
    <property type="entry name" value="NAD(P)-bd_dom_sf"/>
</dbReference>
<dbReference type="NCBIfam" id="TIGR00465">
    <property type="entry name" value="ilvC"/>
    <property type="match status" value="1"/>
</dbReference>
<dbReference type="NCBIfam" id="NF004017">
    <property type="entry name" value="PRK05479.1"/>
    <property type="match status" value="1"/>
</dbReference>
<dbReference type="NCBIfam" id="NF009940">
    <property type="entry name" value="PRK13403.1"/>
    <property type="match status" value="1"/>
</dbReference>
<dbReference type="PANTHER" id="PTHR21371">
    <property type="entry name" value="KETOL-ACID REDUCTOISOMERASE, MITOCHONDRIAL"/>
    <property type="match status" value="1"/>
</dbReference>
<dbReference type="PANTHER" id="PTHR21371:SF1">
    <property type="entry name" value="KETOL-ACID REDUCTOISOMERASE, MITOCHONDRIAL"/>
    <property type="match status" value="1"/>
</dbReference>
<dbReference type="Pfam" id="PF01450">
    <property type="entry name" value="KARI_C"/>
    <property type="match status" value="1"/>
</dbReference>
<dbReference type="Pfam" id="PF07991">
    <property type="entry name" value="KARI_N"/>
    <property type="match status" value="1"/>
</dbReference>
<dbReference type="PIRSF" id="PIRSF000116">
    <property type="entry name" value="IlvC_gammaproteo"/>
    <property type="match status" value="1"/>
</dbReference>
<dbReference type="SUPFAM" id="SSF48179">
    <property type="entry name" value="6-phosphogluconate dehydrogenase C-terminal domain-like"/>
    <property type="match status" value="1"/>
</dbReference>
<dbReference type="SUPFAM" id="SSF51735">
    <property type="entry name" value="NAD(P)-binding Rossmann-fold domains"/>
    <property type="match status" value="1"/>
</dbReference>
<dbReference type="PROSITE" id="PS51851">
    <property type="entry name" value="KARI_C"/>
    <property type="match status" value="1"/>
</dbReference>
<dbReference type="PROSITE" id="PS51850">
    <property type="entry name" value="KARI_N"/>
    <property type="match status" value="1"/>
</dbReference>
<reference key="1">
    <citation type="submission" date="2006-05" db="EMBL/GenBank/DDBJ databases">
        <authorList>
            <consortium name="Genoscope"/>
        </authorList>
    </citation>
    <scope>NUCLEOTIDE SEQUENCE [LARGE SCALE GENOMIC DNA]</scope>
    <source>
        <strain>RCC307</strain>
    </source>
</reference>
<protein>
    <recommendedName>
        <fullName evidence="1">Ketol-acid reductoisomerase (NADP(+))</fullName>
        <shortName evidence="1">KARI</shortName>
        <ecNumber evidence="1">1.1.1.86</ecNumber>
    </recommendedName>
    <alternativeName>
        <fullName evidence="1">Acetohydroxy-acid isomeroreductase</fullName>
        <shortName evidence="1">AHIR</shortName>
    </alternativeName>
    <alternativeName>
        <fullName evidence="1">Alpha-keto-beta-hydroxylacyl reductoisomerase</fullName>
    </alternativeName>
    <alternativeName>
        <fullName evidence="1">Ketol-acid reductoisomerase type 1</fullName>
    </alternativeName>
    <alternativeName>
        <fullName evidence="1">Ketol-acid reductoisomerase type I</fullName>
    </alternativeName>
</protein>
<keyword id="KW-0028">Amino-acid biosynthesis</keyword>
<keyword id="KW-0100">Branched-chain amino acid biosynthesis</keyword>
<keyword id="KW-0460">Magnesium</keyword>
<keyword id="KW-0479">Metal-binding</keyword>
<keyword id="KW-0521">NADP</keyword>
<keyword id="KW-0560">Oxidoreductase</keyword>
<keyword id="KW-1185">Reference proteome</keyword>
<gene>
    <name evidence="1" type="primary">ilvC</name>
    <name type="ordered locus">SynRCC307_0594</name>
</gene>
<sequence length="331" mass="35567">MATLYYDTDADLGLLSGKTVAIIGYGSQGHAHALNLKDSGVDVVVGLYEGSRSADKAKADGLEVLSVADAAAKADWIMVLLPDEFQKEVYDKEIAPHLSAGKVLSFAHGFNIRFGLIKPPADVDVVMIAPKGPGHTVRWEYQNAQGVPALFAIEQDASGNARGLAMAYAKGIGGTRAGILETNFKEETETDLFGEQAVLCGGLSELVKAGFETLVEAGYQPELAYFECLHEVKLIVDLMVKGGLSAMRDSISNTAEYGDYVSGPRLITAETKAEMKRILGDIQDGTFAKNFVAECEAGKPEMNKIRERDSAHKIEEVGKGLRAMFSWLKAA</sequence>
<accession>A5GRI8</accession>